<comment type="function">
    <text evidence="1">SbcCD cleaves DNA hairpin structures. These structures can inhibit DNA replication and are intermediates in certain DNA recombination reactions. The complex acts as a 3'-&gt;5' double strand exonuclease that can open hairpins. It also has a 5' single-strand endonuclease activity (By similarity).</text>
</comment>
<comment type="subunit">
    <text evidence="1">Heterodimer of SbcC and SbcD.</text>
</comment>
<comment type="similarity">
    <text evidence="2">Belongs to the SbcD family.</text>
</comment>
<proteinExistence type="inferred from homology"/>
<dbReference type="EMBL" id="AF010496">
    <property type="protein sequence ID" value="AAC16119.1"/>
    <property type="molecule type" value="Genomic_DNA"/>
</dbReference>
<dbReference type="EMBL" id="CP001312">
    <property type="protein sequence ID" value="ADE85863.1"/>
    <property type="molecule type" value="Genomic_DNA"/>
</dbReference>
<dbReference type="PIR" id="T03466">
    <property type="entry name" value="T03466"/>
</dbReference>
<dbReference type="RefSeq" id="WP_013067842.1">
    <property type="nucleotide sequence ID" value="NC_014034.1"/>
</dbReference>
<dbReference type="SMR" id="O68033"/>
<dbReference type="STRING" id="272942.RCAP_rcc02133"/>
<dbReference type="GeneID" id="31490984"/>
<dbReference type="KEGG" id="rcp:RCAP_rcc02133"/>
<dbReference type="eggNOG" id="COG0420">
    <property type="taxonomic scope" value="Bacteria"/>
</dbReference>
<dbReference type="HOGENOM" id="CLU_038045_2_1_5"/>
<dbReference type="OrthoDB" id="9773856at2"/>
<dbReference type="Proteomes" id="UP000002361">
    <property type="component" value="Chromosome"/>
</dbReference>
<dbReference type="GO" id="GO:0008408">
    <property type="term" value="F:3'-5' exonuclease activity"/>
    <property type="evidence" value="ECO:0007669"/>
    <property type="project" value="InterPro"/>
</dbReference>
<dbReference type="GO" id="GO:0004519">
    <property type="term" value="F:endonuclease activity"/>
    <property type="evidence" value="ECO:0007669"/>
    <property type="project" value="InterPro"/>
</dbReference>
<dbReference type="GO" id="GO:0006259">
    <property type="term" value="P:DNA metabolic process"/>
    <property type="evidence" value="ECO:0007669"/>
    <property type="project" value="InterPro"/>
</dbReference>
<dbReference type="CDD" id="cd00840">
    <property type="entry name" value="MPP_Mre11_N"/>
    <property type="match status" value="1"/>
</dbReference>
<dbReference type="Gene3D" id="3.60.21.10">
    <property type="match status" value="1"/>
</dbReference>
<dbReference type="InterPro" id="IPR004843">
    <property type="entry name" value="Calcineurin-like_PHP_ApaH"/>
</dbReference>
<dbReference type="InterPro" id="IPR050535">
    <property type="entry name" value="DNA_Repair-Maintenance_Comp"/>
</dbReference>
<dbReference type="InterPro" id="IPR029052">
    <property type="entry name" value="Metallo-depent_PP-like"/>
</dbReference>
<dbReference type="InterPro" id="IPR041796">
    <property type="entry name" value="Mre11_N"/>
</dbReference>
<dbReference type="InterPro" id="IPR004593">
    <property type="entry name" value="SbcD"/>
</dbReference>
<dbReference type="InterPro" id="IPR026843">
    <property type="entry name" value="SbcD_C"/>
</dbReference>
<dbReference type="NCBIfam" id="TIGR00619">
    <property type="entry name" value="sbcd"/>
    <property type="match status" value="1"/>
</dbReference>
<dbReference type="PANTHER" id="PTHR30337">
    <property type="entry name" value="COMPONENT OF ATP-DEPENDENT DSDNA EXONUCLEASE"/>
    <property type="match status" value="1"/>
</dbReference>
<dbReference type="PANTHER" id="PTHR30337:SF0">
    <property type="entry name" value="NUCLEASE SBCCD SUBUNIT D"/>
    <property type="match status" value="1"/>
</dbReference>
<dbReference type="Pfam" id="PF00149">
    <property type="entry name" value="Metallophos"/>
    <property type="match status" value="1"/>
</dbReference>
<dbReference type="Pfam" id="PF12320">
    <property type="entry name" value="SbcD_C"/>
    <property type="match status" value="1"/>
</dbReference>
<dbReference type="SUPFAM" id="SSF56300">
    <property type="entry name" value="Metallo-dependent phosphatases"/>
    <property type="match status" value="1"/>
</dbReference>
<evidence type="ECO:0000250" key="1"/>
<evidence type="ECO:0000305" key="2"/>
<keyword id="KW-0269">Exonuclease</keyword>
<keyword id="KW-0378">Hydrolase</keyword>
<keyword id="KW-0540">Nuclease</keyword>
<keyword id="KW-1185">Reference proteome</keyword>
<reference key="1">
    <citation type="journal article" date="1997" name="Proc. Natl. Acad. Sci. U.S.A.">
        <title>Sequence of a 189-kb segment of the chromosome of Rhodobacter capsulatus SB1003.</title>
        <authorList>
            <person name="Vlcek C."/>
            <person name="Paces V."/>
            <person name="Maltsev N."/>
            <person name="Paces J."/>
            <person name="Haselkorn R."/>
            <person name="Fonstein M."/>
        </authorList>
    </citation>
    <scope>NUCLEOTIDE SEQUENCE [GENOMIC DNA]</scope>
    <source>
        <strain>ATCC BAA-309 / NBRC 16581 / SB1003</strain>
    </source>
</reference>
<reference key="2">
    <citation type="journal article" date="2010" name="J. Bacteriol.">
        <title>Complete genome sequence of the photosynthetic purple nonsulfur bacterium Rhodobacter capsulatus SB 1003.</title>
        <authorList>
            <person name="Strnad H."/>
            <person name="Lapidus A."/>
            <person name="Paces J."/>
            <person name="Ulbrich P."/>
            <person name="Vlcek C."/>
            <person name="Paces V."/>
            <person name="Haselkorn R."/>
        </authorList>
    </citation>
    <scope>NUCLEOTIDE SEQUENCE [LARGE SCALE GENOMIC DNA]</scope>
    <source>
        <strain>ATCC BAA-309 / NBRC 16581 / SB1003</strain>
    </source>
</reference>
<protein>
    <recommendedName>
        <fullName>Nuclease SbcCD subunit D</fullName>
    </recommendedName>
</protein>
<sequence>MRILHTADWHIGQTLNGWSREAEHRAFLADLGEILLAEQVDALLVAGDVFDGLNPSGEAQRLLYAALAGYVRANPRLQIVLTSGNHDPAQRLEAPEAVLRELGVHVLGTLSRGPGGMDLDRHLIPLRDRAGQIRAQVLALPFLRQADLPGLRLGAEEGTEGAVTAALRALLAETVARAAAIAGTLPLIAMAHLTCAGGLESAGAERRILIGGDHAVPPDVFPPALAHVALGHLHRPQSLDGGRVRYSGAPFPLSASEIGYDHGVTLLDLAGGAAPRHIPLPRPVPMLRLPAQGTAPLPEILAALDRLALPDRPRAEGPFLYLALRADRPVTEITAALDAALEALPLRLAGLTITRPETARPAAAPPQDLTRTTPEALFAAAFRDLHGTEPETRHLSAFRDALSEV</sequence>
<gene>
    <name type="primary">sbcD</name>
    <name type="ordered locus">RCAP_rcc02133</name>
</gene>
<name>SBCD_RHOCB</name>
<organism>
    <name type="scientific">Rhodobacter capsulatus (strain ATCC BAA-309 / NBRC 16581 / SB1003)</name>
    <dbReference type="NCBI Taxonomy" id="272942"/>
    <lineage>
        <taxon>Bacteria</taxon>
        <taxon>Pseudomonadati</taxon>
        <taxon>Pseudomonadota</taxon>
        <taxon>Alphaproteobacteria</taxon>
        <taxon>Rhodobacterales</taxon>
        <taxon>Rhodobacter group</taxon>
        <taxon>Rhodobacter</taxon>
    </lineage>
</organism>
<feature type="chain" id="PRO_0000182197" description="Nuclease SbcCD subunit D">
    <location>
        <begin position="1"/>
        <end position="405"/>
    </location>
</feature>
<accession>O68033</accession>
<accession>D5AV81</accession>